<sequence>MASRKLRDQIVIATKFTTDYKGYDVGKGKSANFCGNHKRSLHVSVRDSLRKLQTDWIDILYVHWWDYMSSIEEVMDSLHILVQQGKVLYLGVSDTPAWVVSAANYYATSHGKTPFSIYQGKWNVLNRDFERDIIPMARHFGMALAPWDVMGGGRFQSKKAVEERKKKGEGLRTFFGTSEQTDMEVKISEALLKVAEEHGTESVTAIAIAYVRSKAKHVFPLVGGRKIEHLKQNIEALSIKLTPEQIKYLESIVPFDVGFPTNFIGDDPAVTKKPSFLTEMSAKISFED</sequence>
<gene>
    <name type="primary">AAD10</name>
    <name type="ordered locus">YJR155W</name>
    <name type="ORF">J2245</name>
</gene>
<name>AAD10_YEAST</name>
<keyword id="KW-0560">Oxidoreductase</keyword>
<keyword id="KW-1185">Reference proteome</keyword>
<organism>
    <name type="scientific">Saccharomyces cerevisiae (strain ATCC 204508 / S288c)</name>
    <name type="common">Baker's yeast</name>
    <dbReference type="NCBI Taxonomy" id="559292"/>
    <lineage>
        <taxon>Eukaryota</taxon>
        <taxon>Fungi</taxon>
        <taxon>Dikarya</taxon>
        <taxon>Ascomycota</taxon>
        <taxon>Saccharomycotina</taxon>
        <taxon>Saccharomycetes</taxon>
        <taxon>Saccharomycetales</taxon>
        <taxon>Saccharomycetaceae</taxon>
        <taxon>Saccharomyces</taxon>
    </lineage>
</organism>
<evidence type="ECO:0000305" key="1"/>
<comment type="similarity">
    <text evidence="1">Belongs to the aldo/keto reductase family. Aldo/keto reductase 2 subfamily.</text>
</comment>
<feature type="chain" id="PRO_0000070368" description="Putative aryl-alcohol dehydrogenase AAD10">
    <location>
        <begin position="1"/>
        <end position="288"/>
    </location>
</feature>
<accession>P47182</accession>
<accession>D6VWX4</accession>
<protein>
    <recommendedName>
        <fullName>Putative aryl-alcohol dehydrogenase AAD10</fullName>
        <ecNumber>1.1.1.-</ecNumber>
    </recommendedName>
</protein>
<proteinExistence type="inferred from homology"/>
<reference key="1">
    <citation type="journal article" date="1996" name="EMBO J.">
        <title>Complete nucleotide sequence of Saccharomyces cerevisiae chromosome X.</title>
        <authorList>
            <person name="Galibert F."/>
            <person name="Alexandraki D."/>
            <person name="Baur A."/>
            <person name="Boles E."/>
            <person name="Chalwatzis N."/>
            <person name="Chuat J.-C."/>
            <person name="Coster F."/>
            <person name="Cziepluch C."/>
            <person name="de Haan M."/>
            <person name="Domdey H."/>
            <person name="Durand P."/>
            <person name="Entian K.-D."/>
            <person name="Gatius M."/>
            <person name="Goffeau A."/>
            <person name="Grivell L.A."/>
            <person name="Hennemann A."/>
            <person name="Herbert C.J."/>
            <person name="Heumann K."/>
            <person name="Hilger F."/>
            <person name="Hollenberg C.P."/>
            <person name="Huang M.-E."/>
            <person name="Jacq C."/>
            <person name="Jauniaux J.-C."/>
            <person name="Katsoulou C."/>
            <person name="Kirchrath L."/>
            <person name="Kleine K."/>
            <person name="Kordes E."/>
            <person name="Koetter P."/>
            <person name="Liebl S."/>
            <person name="Louis E.J."/>
            <person name="Manus V."/>
            <person name="Mewes H.-W."/>
            <person name="Miosga T."/>
            <person name="Obermaier B."/>
            <person name="Perea J."/>
            <person name="Pohl T.M."/>
            <person name="Portetelle D."/>
            <person name="Pujol A."/>
            <person name="Purnelle B."/>
            <person name="Ramezani Rad M."/>
            <person name="Rasmussen S.W."/>
            <person name="Rose M."/>
            <person name="Rossau R."/>
            <person name="Schaaff-Gerstenschlaeger I."/>
            <person name="Smits P.H.M."/>
            <person name="Scarcez T."/>
            <person name="Soriano N."/>
            <person name="To Van D."/>
            <person name="Tzermia M."/>
            <person name="Van Broekhoven A."/>
            <person name="Vandenbol M."/>
            <person name="Wedler H."/>
            <person name="von Wettstein D."/>
            <person name="Wambutt R."/>
            <person name="Zagulski M."/>
            <person name="Zollner A."/>
            <person name="Karpfinger-Hartl L."/>
        </authorList>
    </citation>
    <scope>NUCLEOTIDE SEQUENCE [LARGE SCALE GENOMIC DNA]</scope>
    <source>
        <strain>ATCC 204508 / S288c</strain>
    </source>
</reference>
<reference key="2">
    <citation type="journal article" date="2014" name="G3 (Bethesda)">
        <title>The reference genome sequence of Saccharomyces cerevisiae: Then and now.</title>
        <authorList>
            <person name="Engel S.R."/>
            <person name="Dietrich F.S."/>
            <person name="Fisk D.G."/>
            <person name="Binkley G."/>
            <person name="Balakrishnan R."/>
            <person name="Costanzo M.C."/>
            <person name="Dwight S.S."/>
            <person name="Hitz B.C."/>
            <person name="Karra K."/>
            <person name="Nash R.S."/>
            <person name="Weng S."/>
            <person name="Wong E.D."/>
            <person name="Lloyd P."/>
            <person name="Skrzypek M.S."/>
            <person name="Miyasato S.R."/>
            <person name="Simison M."/>
            <person name="Cherry J.M."/>
        </authorList>
    </citation>
    <scope>GENOME REANNOTATION</scope>
    <source>
        <strain>ATCC 204508 / S288c</strain>
    </source>
</reference>
<reference key="3">
    <citation type="journal article" date="2007" name="Genome Res.">
        <title>Approaching a complete repository of sequence-verified protein-encoding clones for Saccharomyces cerevisiae.</title>
        <authorList>
            <person name="Hu Y."/>
            <person name="Rolfs A."/>
            <person name="Bhullar B."/>
            <person name="Murthy T.V.S."/>
            <person name="Zhu C."/>
            <person name="Berger M.F."/>
            <person name="Camargo A.A."/>
            <person name="Kelley F."/>
            <person name="McCarron S."/>
            <person name="Jepson D."/>
            <person name="Richardson A."/>
            <person name="Raphael J."/>
            <person name="Moreira D."/>
            <person name="Taycher E."/>
            <person name="Zuo D."/>
            <person name="Mohr S."/>
            <person name="Kane M.F."/>
            <person name="Williamson J."/>
            <person name="Simpson A.J.G."/>
            <person name="Bulyk M.L."/>
            <person name="Harlow E."/>
            <person name="Marsischky G."/>
            <person name="Kolodner R.D."/>
            <person name="LaBaer J."/>
        </authorList>
    </citation>
    <scope>NUCLEOTIDE SEQUENCE [GENOMIC DNA]</scope>
    <source>
        <strain>ATCC 204508 / S288c</strain>
    </source>
</reference>
<dbReference type="EC" id="1.1.1.-"/>
<dbReference type="EMBL" id="Z49655">
    <property type="protein sequence ID" value="CAA89688.1"/>
    <property type="molecule type" value="Genomic_DNA"/>
</dbReference>
<dbReference type="EMBL" id="AY557908">
    <property type="protein sequence ID" value="AAS56234.1"/>
    <property type="molecule type" value="Genomic_DNA"/>
</dbReference>
<dbReference type="EMBL" id="BK006943">
    <property type="protein sequence ID" value="DAA08940.1"/>
    <property type="molecule type" value="Genomic_DNA"/>
</dbReference>
<dbReference type="PIR" id="S57184">
    <property type="entry name" value="S57184"/>
</dbReference>
<dbReference type="RefSeq" id="NP_012689.1">
    <property type="nucleotide sequence ID" value="NM_001181813.1"/>
</dbReference>
<dbReference type="SMR" id="P47182"/>
<dbReference type="BioGRID" id="33910">
    <property type="interactions" value="47"/>
</dbReference>
<dbReference type="FunCoup" id="P47182">
    <property type="interactions" value="79"/>
</dbReference>
<dbReference type="STRING" id="4932.YJR155W"/>
<dbReference type="PaxDb" id="4932-YJR155W"/>
<dbReference type="PeptideAtlas" id="P47182"/>
<dbReference type="EnsemblFungi" id="YJR155W_mRNA">
    <property type="protein sequence ID" value="YJR155W"/>
    <property type="gene ID" value="YJR155W"/>
</dbReference>
<dbReference type="GeneID" id="853620"/>
<dbReference type="KEGG" id="sce:YJR155W"/>
<dbReference type="AGR" id="SGD:S000003916"/>
<dbReference type="SGD" id="S000003916">
    <property type="gene designation" value="AAD10"/>
</dbReference>
<dbReference type="VEuPathDB" id="FungiDB:YJR155W"/>
<dbReference type="eggNOG" id="KOG1575">
    <property type="taxonomic scope" value="Eukaryota"/>
</dbReference>
<dbReference type="GeneTree" id="ENSGT00940000176306"/>
<dbReference type="HOGENOM" id="CLU_023205_2_2_1"/>
<dbReference type="InParanoid" id="P47182"/>
<dbReference type="OMA" id="IALQPHY"/>
<dbReference type="OrthoDB" id="48988at2759"/>
<dbReference type="BioCyc" id="YEAST:YJR155W-MONOMER"/>
<dbReference type="BioGRID-ORCS" id="853620">
    <property type="hits" value="0 hits in 10 CRISPR screens"/>
</dbReference>
<dbReference type="PRO" id="PR:P47182"/>
<dbReference type="Proteomes" id="UP000002311">
    <property type="component" value="Chromosome X"/>
</dbReference>
<dbReference type="RNAct" id="P47182">
    <property type="molecule type" value="protein"/>
</dbReference>
<dbReference type="GO" id="GO:0047681">
    <property type="term" value="F:aryl-alcohol dehydrogenase (NADP+) activity"/>
    <property type="evidence" value="ECO:0000250"/>
    <property type="project" value="SGD"/>
</dbReference>
<dbReference type="GO" id="GO:0006081">
    <property type="term" value="P:aldehyde metabolic process"/>
    <property type="evidence" value="ECO:0000250"/>
    <property type="project" value="SGD"/>
</dbReference>
<dbReference type="FunFam" id="3.20.20.100:FF:000024">
    <property type="entry name" value="Aryl-alcohol dehydrogenase"/>
    <property type="match status" value="1"/>
</dbReference>
<dbReference type="Gene3D" id="3.20.20.100">
    <property type="entry name" value="NADP-dependent oxidoreductase domain"/>
    <property type="match status" value="1"/>
</dbReference>
<dbReference type="InterPro" id="IPR050523">
    <property type="entry name" value="AKR_Detox_Biosynth"/>
</dbReference>
<dbReference type="InterPro" id="IPR023210">
    <property type="entry name" value="NADP_OxRdtase_dom"/>
</dbReference>
<dbReference type="InterPro" id="IPR036812">
    <property type="entry name" value="NADP_OxRdtase_dom_sf"/>
</dbReference>
<dbReference type="PANTHER" id="PTHR43364:SF2">
    <property type="entry name" value="ARYL-ALCOHOL DEHYDROGENASE AAD10-RELATED"/>
    <property type="match status" value="1"/>
</dbReference>
<dbReference type="PANTHER" id="PTHR43364">
    <property type="entry name" value="NADH-SPECIFIC METHYLGLYOXAL REDUCTASE-RELATED"/>
    <property type="match status" value="1"/>
</dbReference>
<dbReference type="Pfam" id="PF00248">
    <property type="entry name" value="Aldo_ket_red"/>
    <property type="match status" value="1"/>
</dbReference>
<dbReference type="SUPFAM" id="SSF51430">
    <property type="entry name" value="NAD(P)-linked oxidoreductase"/>
    <property type="match status" value="1"/>
</dbReference>